<proteinExistence type="inferred from homology"/>
<name>UXAB_PECCP</name>
<evidence type="ECO:0000255" key="1">
    <source>
        <dbReference type="HAMAP-Rule" id="MF_00670"/>
    </source>
</evidence>
<protein>
    <recommendedName>
        <fullName evidence="1">Altronate oxidoreductase</fullName>
        <ecNumber evidence="1">1.1.1.58</ecNumber>
    </recommendedName>
    <alternativeName>
        <fullName evidence="1">Tagaturonate dehydrogenase</fullName>
    </alternativeName>
    <alternativeName>
        <fullName evidence="1">Tagaturonate reductase</fullName>
    </alternativeName>
</protein>
<keyword id="KW-0520">NAD</keyword>
<keyword id="KW-0560">Oxidoreductase</keyword>
<comment type="catalytic activity">
    <reaction evidence="1">
        <text>D-altronate + NAD(+) = keto-D-tagaturonate + NADH + H(+)</text>
        <dbReference type="Rhea" id="RHEA:17813"/>
        <dbReference type="ChEBI" id="CHEBI:15378"/>
        <dbReference type="ChEBI" id="CHEBI:17360"/>
        <dbReference type="ChEBI" id="CHEBI:17886"/>
        <dbReference type="ChEBI" id="CHEBI:57540"/>
        <dbReference type="ChEBI" id="CHEBI:57945"/>
        <dbReference type="EC" id="1.1.1.58"/>
    </reaction>
</comment>
<comment type="pathway">
    <text evidence="1">Carbohydrate metabolism; pentose and glucuronate interconversion.</text>
</comment>
<comment type="similarity">
    <text evidence="1">Belongs to the mannitol dehydrogenase family. UxaB subfamily.</text>
</comment>
<sequence length="488" mass="55573">MQTLNRRNFPGRQHPDRVIQFGEGNFLRAFVDWQLDLLNEHTDLDAGIVIVRPIDSDFPPALDTQDGLYTTIIRGLNEQGEAVREPRLIRSVNREINVYRQFDEYLALAHDPNIRFVFSNTTEAGISYHADDSLSDAPPVSFPAKLTRLLYERFCHFDGAADKGWVLLPCELIDYNGVALKELVLRYAAQWKLTPTFTAWLNDHNTFCSTLVDRIVTGYPRAEVEALQQEMGYQDTFWDTAEHFYLFVIQGPQWLAEELRLNKLDLNVRIVDDIKPYKERKVAILNGAHTALVPVAFLAGLDTVGESMDDALIGKFVEKTIAEEIVPVLDLPHDELTSFAQAVLSRFRNPFIQHQLLSISLNGMTKFRTRILPQLLTYRERHGELPARLTFALAALIAFYRGERSGEGDTLQTYPLQDDAHWLERYSTLWAGVKENTVSLAELVNVVLRDADHWEQDLTQVPGLAAQVTEQLQTIVERGMRAAVEGYC</sequence>
<feature type="chain" id="PRO_1000212506" description="Altronate oxidoreductase">
    <location>
        <begin position="1"/>
        <end position="488"/>
    </location>
</feature>
<feature type="binding site" evidence="1">
    <location>
        <begin position="18"/>
        <end position="29"/>
    </location>
    <ligand>
        <name>NAD(+)</name>
        <dbReference type="ChEBI" id="CHEBI:57540"/>
    </ligand>
</feature>
<gene>
    <name evidence="1" type="primary">uxaB</name>
    <name type="ordered locus">PC1_0530</name>
</gene>
<organism>
    <name type="scientific">Pectobacterium carotovorum subsp. carotovorum (strain PC1)</name>
    <dbReference type="NCBI Taxonomy" id="561230"/>
    <lineage>
        <taxon>Bacteria</taxon>
        <taxon>Pseudomonadati</taxon>
        <taxon>Pseudomonadota</taxon>
        <taxon>Gammaproteobacteria</taxon>
        <taxon>Enterobacterales</taxon>
        <taxon>Pectobacteriaceae</taxon>
        <taxon>Pectobacterium</taxon>
    </lineage>
</organism>
<dbReference type="EC" id="1.1.1.58" evidence="1"/>
<dbReference type="EMBL" id="CP001657">
    <property type="protein sequence ID" value="ACT11585.1"/>
    <property type="molecule type" value="Genomic_DNA"/>
</dbReference>
<dbReference type="RefSeq" id="WP_012773237.1">
    <property type="nucleotide sequence ID" value="NC_012917.1"/>
</dbReference>
<dbReference type="SMR" id="C6DKE8"/>
<dbReference type="STRING" id="561230.PC1_0530"/>
<dbReference type="KEGG" id="pct:PC1_0530"/>
<dbReference type="eggNOG" id="COG0246">
    <property type="taxonomic scope" value="Bacteria"/>
</dbReference>
<dbReference type="HOGENOM" id="CLU_027324_1_0_6"/>
<dbReference type="OrthoDB" id="9768714at2"/>
<dbReference type="UniPathway" id="UPA00246"/>
<dbReference type="Proteomes" id="UP000002736">
    <property type="component" value="Chromosome"/>
</dbReference>
<dbReference type="GO" id="GO:0005829">
    <property type="term" value="C:cytosol"/>
    <property type="evidence" value="ECO:0007669"/>
    <property type="project" value="TreeGrafter"/>
</dbReference>
<dbReference type="GO" id="GO:0008926">
    <property type="term" value="F:mannitol-1-phosphate 5-dehydrogenase activity"/>
    <property type="evidence" value="ECO:0007669"/>
    <property type="project" value="TreeGrafter"/>
</dbReference>
<dbReference type="GO" id="GO:0009026">
    <property type="term" value="F:tagaturonate reductase activity"/>
    <property type="evidence" value="ECO:0007669"/>
    <property type="project" value="UniProtKB-UniRule"/>
</dbReference>
<dbReference type="GO" id="GO:0019698">
    <property type="term" value="P:D-galacturonate catabolic process"/>
    <property type="evidence" value="ECO:0007669"/>
    <property type="project" value="TreeGrafter"/>
</dbReference>
<dbReference type="GO" id="GO:0019592">
    <property type="term" value="P:mannitol catabolic process"/>
    <property type="evidence" value="ECO:0007669"/>
    <property type="project" value="TreeGrafter"/>
</dbReference>
<dbReference type="Gene3D" id="1.10.1040.10">
    <property type="entry name" value="N-(1-d-carboxylethyl)-l-norvaline Dehydrogenase, domain 2"/>
    <property type="match status" value="1"/>
</dbReference>
<dbReference type="Gene3D" id="3.40.50.720">
    <property type="entry name" value="NAD(P)-binding Rossmann-like Domain"/>
    <property type="match status" value="1"/>
</dbReference>
<dbReference type="HAMAP" id="MF_00670">
    <property type="entry name" value="Altron_oxidoreduct"/>
    <property type="match status" value="1"/>
</dbReference>
<dbReference type="InterPro" id="IPR008927">
    <property type="entry name" value="6-PGluconate_DH-like_C_sf"/>
</dbReference>
<dbReference type="InterPro" id="IPR013328">
    <property type="entry name" value="6PGD_dom2"/>
</dbReference>
<dbReference type="InterPro" id="IPR023668">
    <property type="entry name" value="Altronate_OxRdtase"/>
</dbReference>
<dbReference type="InterPro" id="IPR013118">
    <property type="entry name" value="Mannitol_DH_C"/>
</dbReference>
<dbReference type="InterPro" id="IPR013131">
    <property type="entry name" value="Mannitol_DH_N"/>
</dbReference>
<dbReference type="InterPro" id="IPR036291">
    <property type="entry name" value="NAD(P)-bd_dom_sf"/>
</dbReference>
<dbReference type="NCBIfam" id="NF002969">
    <property type="entry name" value="PRK03643.1"/>
    <property type="match status" value="1"/>
</dbReference>
<dbReference type="PANTHER" id="PTHR30524:SF0">
    <property type="entry name" value="ALTRONATE OXIDOREDUCTASE-RELATED"/>
    <property type="match status" value="1"/>
</dbReference>
<dbReference type="PANTHER" id="PTHR30524">
    <property type="entry name" value="MANNITOL-1-PHOSPHATE 5-DEHYDROGENASE"/>
    <property type="match status" value="1"/>
</dbReference>
<dbReference type="Pfam" id="PF01232">
    <property type="entry name" value="Mannitol_dh"/>
    <property type="match status" value="1"/>
</dbReference>
<dbReference type="Pfam" id="PF08125">
    <property type="entry name" value="Mannitol_dh_C"/>
    <property type="match status" value="1"/>
</dbReference>
<dbReference type="SUPFAM" id="SSF48179">
    <property type="entry name" value="6-phosphogluconate dehydrogenase C-terminal domain-like"/>
    <property type="match status" value="1"/>
</dbReference>
<dbReference type="SUPFAM" id="SSF51735">
    <property type="entry name" value="NAD(P)-binding Rossmann-fold domains"/>
    <property type="match status" value="1"/>
</dbReference>
<accession>C6DKE8</accession>
<reference key="1">
    <citation type="submission" date="2009-07" db="EMBL/GenBank/DDBJ databases">
        <title>Complete sequence of Pectobacterium carotovorum subsp. carotovorum PC1.</title>
        <authorList>
            <consortium name="US DOE Joint Genome Institute"/>
            <person name="Lucas S."/>
            <person name="Copeland A."/>
            <person name="Lapidus A."/>
            <person name="Glavina del Rio T."/>
            <person name="Tice H."/>
            <person name="Bruce D."/>
            <person name="Goodwin L."/>
            <person name="Pitluck S."/>
            <person name="Munk A.C."/>
            <person name="Brettin T."/>
            <person name="Detter J.C."/>
            <person name="Han C."/>
            <person name="Tapia R."/>
            <person name="Larimer F."/>
            <person name="Land M."/>
            <person name="Hauser L."/>
            <person name="Kyrpides N."/>
            <person name="Mikhailova N."/>
            <person name="Balakrishnan V."/>
            <person name="Glasner J."/>
            <person name="Perna N.T."/>
        </authorList>
    </citation>
    <scope>NUCLEOTIDE SEQUENCE [LARGE SCALE GENOMIC DNA]</scope>
    <source>
        <strain>PC1</strain>
    </source>
</reference>